<dbReference type="EMBL" id="CP000304">
    <property type="protein sequence ID" value="ABP81280.1"/>
    <property type="molecule type" value="Genomic_DNA"/>
</dbReference>
<dbReference type="RefSeq" id="WP_003283112.1">
    <property type="nucleotide sequence ID" value="NC_009434.1"/>
</dbReference>
<dbReference type="SMR" id="A4VQM9"/>
<dbReference type="GeneID" id="77258970"/>
<dbReference type="KEGG" id="psa:PST_3655"/>
<dbReference type="eggNOG" id="COG0238">
    <property type="taxonomic scope" value="Bacteria"/>
</dbReference>
<dbReference type="HOGENOM" id="CLU_148710_2_3_6"/>
<dbReference type="Proteomes" id="UP000000233">
    <property type="component" value="Chromosome"/>
</dbReference>
<dbReference type="GO" id="GO:0022627">
    <property type="term" value="C:cytosolic small ribosomal subunit"/>
    <property type="evidence" value="ECO:0007669"/>
    <property type="project" value="TreeGrafter"/>
</dbReference>
<dbReference type="GO" id="GO:0070181">
    <property type="term" value="F:small ribosomal subunit rRNA binding"/>
    <property type="evidence" value="ECO:0007669"/>
    <property type="project" value="TreeGrafter"/>
</dbReference>
<dbReference type="GO" id="GO:0003735">
    <property type="term" value="F:structural constituent of ribosome"/>
    <property type="evidence" value="ECO:0007669"/>
    <property type="project" value="InterPro"/>
</dbReference>
<dbReference type="GO" id="GO:0006412">
    <property type="term" value="P:translation"/>
    <property type="evidence" value="ECO:0007669"/>
    <property type="project" value="UniProtKB-UniRule"/>
</dbReference>
<dbReference type="FunFam" id="4.10.640.10:FF:000001">
    <property type="entry name" value="30S ribosomal protein S18"/>
    <property type="match status" value="1"/>
</dbReference>
<dbReference type="Gene3D" id="4.10.640.10">
    <property type="entry name" value="Ribosomal protein S18"/>
    <property type="match status" value="1"/>
</dbReference>
<dbReference type="HAMAP" id="MF_00270">
    <property type="entry name" value="Ribosomal_bS18"/>
    <property type="match status" value="1"/>
</dbReference>
<dbReference type="InterPro" id="IPR001648">
    <property type="entry name" value="Ribosomal_bS18"/>
</dbReference>
<dbReference type="InterPro" id="IPR018275">
    <property type="entry name" value="Ribosomal_bS18_CS"/>
</dbReference>
<dbReference type="InterPro" id="IPR036870">
    <property type="entry name" value="Ribosomal_bS18_sf"/>
</dbReference>
<dbReference type="NCBIfam" id="TIGR00165">
    <property type="entry name" value="S18"/>
    <property type="match status" value="1"/>
</dbReference>
<dbReference type="PANTHER" id="PTHR13479">
    <property type="entry name" value="30S RIBOSOMAL PROTEIN S18"/>
    <property type="match status" value="1"/>
</dbReference>
<dbReference type="PANTHER" id="PTHR13479:SF40">
    <property type="entry name" value="SMALL RIBOSOMAL SUBUNIT PROTEIN BS18M"/>
    <property type="match status" value="1"/>
</dbReference>
<dbReference type="Pfam" id="PF01084">
    <property type="entry name" value="Ribosomal_S18"/>
    <property type="match status" value="1"/>
</dbReference>
<dbReference type="PRINTS" id="PR00974">
    <property type="entry name" value="RIBOSOMALS18"/>
</dbReference>
<dbReference type="SUPFAM" id="SSF46911">
    <property type="entry name" value="Ribosomal protein S18"/>
    <property type="match status" value="1"/>
</dbReference>
<dbReference type="PROSITE" id="PS00057">
    <property type="entry name" value="RIBOSOMAL_S18"/>
    <property type="match status" value="1"/>
</dbReference>
<evidence type="ECO:0000255" key="1">
    <source>
        <dbReference type="HAMAP-Rule" id="MF_00270"/>
    </source>
</evidence>
<evidence type="ECO:0000305" key="2"/>
<proteinExistence type="inferred from homology"/>
<accession>A4VQM9</accession>
<name>RS18_STUS1</name>
<sequence>MARFFRRRKFCRFTAEGVKEIDYKDLNTLKAYISETGKIVPSRITGTKARYQRQLATAIKRARYLALLPYTDSHGR</sequence>
<reference key="1">
    <citation type="journal article" date="2008" name="Proc. Natl. Acad. Sci. U.S.A.">
        <title>Nitrogen fixation island and rhizosphere competence traits in the genome of root-associated Pseudomonas stutzeri A1501.</title>
        <authorList>
            <person name="Yan Y."/>
            <person name="Yang J."/>
            <person name="Dou Y."/>
            <person name="Chen M."/>
            <person name="Ping S."/>
            <person name="Peng J."/>
            <person name="Lu W."/>
            <person name="Zhang W."/>
            <person name="Yao Z."/>
            <person name="Li H."/>
            <person name="Liu W."/>
            <person name="He S."/>
            <person name="Geng L."/>
            <person name="Zhang X."/>
            <person name="Yang F."/>
            <person name="Yu H."/>
            <person name="Zhan Y."/>
            <person name="Li D."/>
            <person name="Lin Z."/>
            <person name="Wang Y."/>
            <person name="Elmerich C."/>
            <person name="Lin M."/>
            <person name="Jin Q."/>
        </authorList>
    </citation>
    <scope>NUCLEOTIDE SEQUENCE [LARGE SCALE GENOMIC DNA]</scope>
    <source>
        <strain>A1501</strain>
    </source>
</reference>
<organism>
    <name type="scientific">Stutzerimonas stutzeri (strain A1501)</name>
    <name type="common">Pseudomonas stutzeri</name>
    <dbReference type="NCBI Taxonomy" id="379731"/>
    <lineage>
        <taxon>Bacteria</taxon>
        <taxon>Pseudomonadati</taxon>
        <taxon>Pseudomonadota</taxon>
        <taxon>Gammaproteobacteria</taxon>
        <taxon>Pseudomonadales</taxon>
        <taxon>Pseudomonadaceae</taxon>
        <taxon>Stutzerimonas</taxon>
    </lineage>
</organism>
<comment type="function">
    <text evidence="1">Binds as a heterodimer with protein bS6 to the central domain of the 16S rRNA, where it helps stabilize the platform of the 30S subunit.</text>
</comment>
<comment type="subunit">
    <text evidence="1">Part of the 30S ribosomal subunit. Forms a tight heterodimer with protein bS6.</text>
</comment>
<comment type="similarity">
    <text evidence="1">Belongs to the bacterial ribosomal protein bS18 family.</text>
</comment>
<feature type="chain" id="PRO_1000003575" description="Small ribosomal subunit protein bS18">
    <location>
        <begin position="1"/>
        <end position="76"/>
    </location>
</feature>
<gene>
    <name evidence="1" type="primary">rpsR</name>
    <name type="ordered locus">PST_3655</name>
</gene>
<protein>
    <recommendedName>
        <fullName evidence="1">Small ribosomal subunit protein bS18</fullName>
    </recommendedName>
    <alternativeName>
        <fullName evidence="2">30S ribosomal protein S18</fullName>
    </alternativeName>
</protein>
<keyword id="KW-1185">Reference proteome</keyword>
<keyword id="KW-0687">Ribonucleoprotein</keyword>
<keyword id="KW-0689">Ribosomal protein</keyword>
<keyword id="KW-0694">RNA-binding</keyword>
<keyword id="KW-0699">rRNA-binding</keyword>